<evidence type="ECO:0000255" key="1">
    <source>
        <dbReference type="HAMAP-Rule" id="MF_01026"/>
    </source>
</evidence>
<dbReference type="EC" id="4.2.1.33" evidence="1"/>
<dbReference type="EMBL" id="AL646052">
    <property type="protein sequence ID" value="CAD15692.1"/>
    <property type="molecule type" value="Genomic_DNA"/>
</dbReference>
<dbReference type="RefSeq" id="WP_011001926.1">
    <property type="nucleotide sequence ID" value="NC_003295.1"/>
</dbReference>
<dbReference type="SMR" id="Q8XXX3"/>
<dbReference type="STRING" id="267608.RSc1990"/>
<dbReference type="EnsemblBacteria" id="CAD15692">
    <property type="protein sequence ID" value="CAD15692"/>
    <property type="gene ID" value="RSc1990"/>
</dbReference>
<dbReference type="KEGG" id="rso:RSc1990"/>
<dbReference type="eggNOG" id="COG0065">
    <property type="taxonomic scope" value="Bacteria"/>
</dbReference>
<dbReference type="HOGENOM" id="CLU_006714_3_4_4"/>
<dbReference type="UniPathway" id="UPA00048">
    <property type="reaction ID" value="UER00071"/>
</dbReference>
<dbReference type="Proteomes" id="UP000001436">
    <property type="component" value="Chromosome"/>
</dbReference>
<dbReference type="GO" id="GO:0003861">
    <property type="term" value="F:3-isopropylmalate dehydratase activity"/>
    <property type="evidence" value="ECO:0007669"/>
    <property type="project" value="UniProtKB-UniRule"/>
</dbReference>
<dbReference type="GO" id="GO:0051539">
    <property type="term" value="F:4 iron, 4 sulfur cluster binding"/>
    <property type="evidence" value="ECO:0007669"/>
    <property type="project" value="UniProtKB-KW"/>
</dbReference>
<dbReference type="GO" id="GO:0046872">
    <property type="term" value="F:metal ion binding"/>
    <property type="evidence" value="ECO:0007669"/>
    <property type="project" value="UniProtKB-KW"/>
</dbReference>
<dbReference type="GO" id="GO:0009098">
    <property type="term" value="P:L-leucine biosynthetic process"/>
    <property type="evidence" value="ECO:0007669"/>
    <property type="project" value="UniProtKB-UniRule"/>
</dbReference>
<dbReference type="CDD" id="cd01583">
    <property type="entry name" value="IPMI"/>
    <property type="match status" value="1"/>
</dbReference>
<dbReference type="FunFam" id="3.30.499.10:FF:000007">
    <property type="entry name" value="3-isopropylmalate dehydratase large subunit"/>
    <property type="match status" value="1"/>
</dbReference>
<dbReference type="Gene3D" id="3.30.499.10">
    <property type="entry name" value="Aconitase, domain 3"/>
    <property type="match status" value="2"/>
</dbReference>
<dbReference type="HAMAP" id="MF_01026">
    <property type="entry name" value="LeuC_type1"/>
    <property type="match status" value="1"/>
</dbReference>
<dbReference type="InterPro" id="IPR004430">
    <property type="entry name" value="3-IsopropMal_deHydase_lsu"/>
</dbReference>
<dbReference type="InterPro" id="IPR015931">
    <property type="entry name" value="Acnase/IPM_dHydase_lsu_aba_1/3"/>
</dbReference>
<dbReference type="InterPro" id="IPR001030">
    <property type="entry name" value="Acoase/IPM_deHydtase_lsu_aba"/>
</dbReference>
<dbReference type="InterPro" id="IPR018136">
    <property type="entry name" value="Aconitase_4Fe-4S_BS"/>
</dbReference>
<dbReference type="InterPro" id="IPR036008">
    <property type="entry name" value="Aconitase_4Fe-4S_dom"/>
</dbReference>
<dbReference type="InterPro" id="IPR050067">
    <property type="entry name" value="IPM_dehydratase_rel_enz"/>
</dbReference>
<dbReference type="InterPro" id="IPR033941">
    <property type="entry name" value="IPMI_cat"/>
</dbReference>
<dbReference type="NCBIfam" id="TIGR00170">
    <property type="entry name" value="leuC"/>
    <property type="match status" value="1"/>
</dbReference>
<dbReference type="NCBIfam" id="NF004016">
    <property type="entry name" value="PRK05478.1"/>
    <property type="match status" value="1"/>
</dbReference>
<dbReference type="NCBIfam" id="NF009116">
    <property type="entry name" value="PRK12466.1"/>
    <property type="match status" value="1"/>
</dbReference>
<dbReference type="PANTHER" id="PTHR43822:SF9">
    <property type="entry name" value="3-ISOPROPYLMALATE DEHYDRATASE"/>
    <property type="match status" value="1"/>
</dbReference>
<dbReference type="PANTHER" id="PTHR43822">
    <property type="entry name" value="HOMOACONITASE, MITOCHONDRIAL-RELATED"/>
    <property type="match status" value="1"/>
</dbReference>
<dbReference type="Pfam" id="PF00330">
    <property type="entry name" value="Aconitase"/>
    <property type="match status" value="1"/>
</dbReference>
<dbReference type="PRINTS" id="PR00415">
    <property type="entry name" value="ACONITASE"/>
</dbReference>
<dbReference type="SUPFAM" id="SSF53732">
    <property type="entry name" value="Aconitase iron-sulfur domain"/>
    <property type="match status" value="1"/>
</dbReference>
<dbReference type="PROSITE" id="PS00450">
    <property type="entry name" value="ACONITASE_1"/>
    <property type="match status" value="1"/>
</dbReference>
<dbReference type="PROSITE" id="PS01244">
    <property type="entry name" value="ACONITASE_2"/>
    <property type="match status" value="1"/>
</dbReference>
<gene>
    <name evidence="1" type="primary">leuC</name>
    <name type="ordered locus">RSc1990</name>
    <name type="ORF">RS03558</name>
</gene>
<comment type="function">
    <text evidence="1">Catalyzes the isomerization between 2-isopropylmalate and 3-isopropylmalate, via the formation of 2-isopropylmaleate.</text>
</comment>
<comment type="catalytic activity">
    <reaction evidence="1">
        <text>(2R,3S)-3-isopropylmalate = (2S)-2-isopropylmalate</text>
        <dbReference type="Rhea" id="RHEA:32287"/>
        <dbReference type="ChEBI" id="CHEBI:1178"/>
        <dbReference type="ChEBI" id="CHEBI:35121"/>
        <dbReference type="EC" id="4.2.1.33"/>
    </reaction>
</comment>
<comment type="cofactor">
    <cofactor evidence="1">
        <name>[4Fe-4S] cluster</name>
        <dbReference type="ChEBI" id="CHEBI:49883"/>
    </cofactor>
    <text evidence="1">Binds 1 [4Fe-4S] cluster per subunit.</text>
</comment>
<comment type="pathway">
    <text evidence="1">Amino-acid biosynthesis; L-leucine biosynthesis; L-leucine from 3-methyl-2-oxobutanoate: step 2/4.</text>
</comment>
<comment type="subunit">
    <text evidence="1">Heterodimer of LeuC and LeuD.</text>
</comment>
<comment type="similarity">
    <text evidence="1">Belongs to the aconitase/IPM isomerase family. LeuC type 1 subfamily.</text>
</comment>
<feature type="chain" id="PRO_0000076793" description="3-isopropylmalate dehydratase large subunit">
    <location>
        <begin position="1"/>
        <end position="469"/>
    </location>
</feature>
<feature type="binding site" evidence="1">
    <location>
        <position position="347"/>
    </location>
    <ligand>
        <name>[4Fe-4S] cluster</name>
        <dbReference type="ChEBI" id="CHEBI:49883"/>
    </ligand>
</feature>
<feature type="binding site" evidence="1">
    <location>
        <position position="410"/>
    </location>
    <ligand>
        <name>[4Fe-4S] cluster</name>
        <dbReference type="ChEBI" id="CHEBI:49883"/>
    </ligand>
</feature>
<feature type="binding site" evidence="1">
    <location>
        <position position="413"/>
    </location>
    <ligand>
        <name>[4Fe-4S] cluster</name>
        <dbReference type="ChEBI" id="CHEBI:49883"/>
    </ligand>
</feature>
<accession>Q8XXX3</accession>
<reference key="1">
    <citation type="journal article" date="2002" name="Nature">
        <title>Genome sequence of the plant pathogen Ralstonia solanacearum.</title>
        <authorList>
            <person name="Salanoubat M."/>
            <person name="Genin S."/>
            <person name="Artiguenave F."/>
            <person name="Gouzy J."/>
            <person name="Mangenot S."/>
            <person name="Arlat M."/>
            <person name="Billault A."/>
            <person name="Brottier P."/>
            <person name="Camus J.-C."/>
            <person name="Cattolico L."/>
            <person name="Chandler M."/>
            <person name="Choisne N."/>
            <person name="Claudel-Renard C."/>
            <person name="Cunnac S."/>
            <person name="Demange N."/>
            <person name="Gaspin C."/>
            <person name="Lavie M."/>
            <person name="Moisan A."/>
            <person name="Robert C."/>
            <person name="Saurin W."/>
            <person name="Schiex T."/>
            <person name="Siguier P."/>
            <person name="Thebault P."/>
            <person name="Whalen M."/>
            <person name="Wincker P."/>
            <person name="Levy M."/>
            <person name="Weissenbach J."/>
            <person name="Boucher C.A."/>
        </authorList>
    </citation>
    <scope>NUCLEOTIDE SEQUENCE [LARGE SCALE GENOMIC DNA]</scope>
    <source>
        <strain>ATCC BAA-1114 / GMI1000</strain>
    </source>
</reference>
<organism>
    <name type="scientific">Ralstonia nicotianae (strain ATCC BAA-1114 / GMI1000)</name>
    <name type="common">Ralstonia solanacearum</name>
    <dbReference type="NCBI Taxonomy" id="267608"/>
    <lineage>
        <taxon>Bacteria</taxon>
        <taxon>Pseudomonadati</taxon>
        <taxon>Pseudomonadota</taxon>
        <taxon>Betaproteobacteria</taxon>
        <taxon>Burkholderiales</taxon>
        <taxon>Burkholderiaceae</taxon>
        <taxon>Ralstonia</taxon>
        <taxon>Ralstonia solanacearum species complex</taxon>
    </lineage>
</organism>
<keyword id="KW-0004">4Fe-4S</keyword>
<keyword id="KW-0028">Amino-acid biosynthesis</keyword>
<keyword id="KW-0100">Branched-chain amino acid biosynthesis</keyword>
<keyword id="KW-0408">Iron</keyword>
<keyword id="KW-0411">Iron-sulfur</keyword>
<keyword id="KW-0432">Leucine biosynthesis</keyword>
<keyword id="KW-0456">Lyase</keyword>
<keyword id="KW-0479">Metal-binding</keyword>
<keyword id="KW-1185">Reference proteome</keyword>
<protein>
    <recommendedName>
        <fullName evidence="1">3-isopropylmalate dehydratase large subunit</fullName>
        <ecNumber evidence="1">4.2.1.33</ecNumber>
    </recommendedName>
    <alternativeName>
        <fullName evidence="1">Alpha-IPM isomerase</fullName>
        <shortName evidence="1">IPMI</shortName>
    </alternativeName>
    <alternativeName>
        <fullName evidence="1">Isopropylmalate isomerase</fullName>
    </alternativeName>
</protein>
<sequence>MAKTLYDKLWDDHVVHTEEDGTTVLYIDRQLLHEVTSPQAFEGLKLANRPVWRISANLAVSDHNVPTTDRSHGIADPVSKLQVDTLDANCDSFGITQFKMTDKRQGIVHVIGPEQGATLPGMTVVCGDSHTSTHGAFGALAHGIGTSEVEHVLATQTLLAKKSKNMLVKVEGTLPRGCTAKDIVLAIIGKIGTAGGTGYAMEFGGSAIRALSMEGRMTVCNMAIEAGARAGMVGVDDITLEYIKGRPFAPQGVEWEQAVAYWRSLHSDEGARFDHVVELRAEEIRPQVSWGTSPEMVVSIEDRVPDPDKEKDPVKRNAMERALEYMALQPNVAIGDIRIDKVFIGSCTNSRIEDMRAAAWVVQKLGKRIASNVKLAMVVPGSGLVKEQAEREGLDKIFKAAGFEWREPGCSMCLAMNADRLEPGERCASTSNRNFEGRQGAGGRTHLVSPAMAAAAALEGHFVDVRKLG</sequence>
<name>LEUC_RALN1</name>
<proteinExistence type="inferred from homology"/>